<feature type="chain" id="PRO_0000100091" description="Putative 3-methyladenine DNA glycosylase">
    <location>
        <begin position="1"/>
        <end position="207"/>
    </location>
</feature>
<comment type="similarity">
    <text evidence="1">Belongs to the DNA glycosylase MPG family.</text>
</comment>
<reference key="1">
    <citation type="journal article" date="2001" name="Science">
        <title>Comparative genomics of Listeria species.</title>
        <authorList>
            <person name="Glaser P."/>
            <person name="Frangeul L."/>
            <person name="Buchrieser C."/>
            <person name="Rusniok C."/>
            <person name="Amend A."/>
            <person name="Baquero F."/>
            <person name="Berche P."/>
            <person name="Bloecker H."/>
            <person name="Brandt P."/>
            <person name="Chakraborty T."/>
            <person name="Charbit A."/>
            <person name="Chetouani F."/>
            <person name="Couve E."/>
            <person name="de Daruvar A."/>
            <person name="Dehoux P."/>
            <person name="Domann E."/>
            <person name="Dominguez-Bernal G."/>
            <person name="Duchaud E."/>
            <person name="Durant L."/>
            <person name="Dussurget O."/>
            <person name="Entian K.-D."/>
            <person name="Fsihi H."/>
            <person name="Garcia-del Portillo F."/>
            <person name="Garrido P."/>
            <person name="Gautier L."/>
            <person name="Goebel W."/>
            <person name="Gomez-Lopez N."/>
            <person name="Hain T."/>
            <person name="Hauf J."/>
            <person name="Jackson D."/>
            <person name="Jones L.-M."/>
            <person name="Kaerst U."/>
            <person name="Kreft J."/>
            <person name="Kuhn M."/>
            <person name="Kunst F."/>
            <person name="Kurapkat G."/>
            <person name="Madueno E."/>
            <person name="Maitournam A."/>
            <person name="Mata Vicente J."/>
            <person name="Ng E."/>
            <person name="Nedjari H."/>
            <person name="Nordsiek G."/>
            <person name="Novella S."/>
            <person name="de Pablos B."/>
            <person name="Perez-Diaz J.-C."/>
            <person name="Purcell R."/>
            <person name="Remmel B."/>
            <person name="Rose M."/>
            <person name="Schlueter T."/>
            <person name="Simoes N."/>
            <person name="Tierrez A."/>
            <person name="Vazquez-Boland J.-A."/>
            <person name="Voss H."/>
            <person name="Wehland J."/>
            <person name="Cossart P."/>
        </authorList>
    </citation>
    <scope>NUCLEOTIDE SEQUENCE [LARGE SCALE GENOMIC DNA]</scope>
    <source>
        <strain>ATCC BAA-679 / EGD-e</strain>
    </source>
</reference>
<protein>
    <recommendedName>
        <fullName evidence="1">Putative 3-methyladenine DNA glycosylase</fullName>
        <ecNumber evidence="1">3.2.2.-</ecNumber>
    </recommendedName>
</protein>
<proteinExistence type="inferred from homology"/>
<gene>
    <name type="ordered locus">lmo0928</name>
</gene>
<evidence type="ECO:0000255" key="1">
    <source>
        <dbReference type="HAMAP-Rule" id="MF_00527"/>
    </source>
</evidence>
<accession>P58621</accession>
<keyword id="KW-0227">DNA damage</keyword>
<keyword id="KW-0234">DNA repair</keyword>
<keyword id="KW-0378">Hydrolase</keyword>
<keyword id="KW-1185">Reference proteome</keyword>
<name>3MGH_LISMO</name>
<dbReference type="EC" id="3.2.2.-" evidence="1"/>
<dbReference type="EMBL" id="AL591977">
    <property type="protein sequence ID" value="CAC99006.1"/>
    <property type="molecule type" value="Genomic_DNA"/>
</dbReference>
<dbReference type="PIR" id="AH1190">
    <property type="entry name" value="AH1190"/>
</dbReference>
<dbReference type="RefSeq" id="NP_464453.1">
    <property type="nucleotide sequence ID" value="NC_003210.1"/>
</dbReference>
<dbReference type="RefSeq" id="WP_003722750.1">
    <property type="nucleotide sequence ID" value="NZ_CP149495.1"/>
</dbReference>
<dbReference type="SMR" id="P58621"/>
<dbReference type="STRING" id="169963.gene:17593583"/>
<dbReference type="PaxDb" id="169963-lmo0928"/>
<dbReference type="EnsemblBacteria" id="CAC99006">
    <property type="protein sequence ID" value="CAC99006"/>
    <property type="gene ID" value="CAC99006"/>
</dbReference>
<dbReference type="GeneID" id="985312"/>
<dbReference type="KEGG" id="lmo:lmo0928"/>
<dbReference type="PATRIC" id="fig|169963.11.peg.954"/>
<dbReference type="eggNOG" id="COG2094">
    <property type="taxonomic scope" value="Bacteria"/>
</dbReference>
<dbReference type="HOGENOM" id="CLU_060471_2_0_9"/>
<dbReference type="OrthoDB" id="9794313at2"/>
<dbReference type="PhylomeDB" id="P58621"/>
<dbReference type="BioCyc" id="LMON169963:LMO0928-MONOMER"/>
<dbReference type="Proteomes" id="UP000000817">
    <property type="component" value="Chromosome"/>
</dbReference>
<dbReference type="GO" id="GO:0003905">
    <property type="term" value="F:alkylbase DNA N-glycosylase activity"/>
    <property type="evidence" value="ECO:0000318"/>
    <property type="project" value="GO_Central"/>
</dbReference>
<dbReference type="GO" id="GO:0003677">
    <property type="term" value="F:DNA binding"/>
    <property type="evidence" value="ECO:0007669"/>
    <property type="project" value="InterPro"/>
</dbReference>
<dbReference type="GO" id="GO:0006284">
    <property type="term" value="P:base-excision repair"/>
    <property type="evidence" value="ECO:0000318"/>
    <property type="project" value="GO_Central"/>
</dbReference>
<dbReference type="CDD" id="cd00540">
    <property type="entry name" value="AAG"/>
    <property type="match status" value="1"/>
</dbReference>
<dbReference type="FunFam" id="3.10.300.10:FF:000001">
    <property type="entry name" value="Putative 3-methyladenine DNA glycosylase"/>
    <property type="match status" value="1"/>
</dbReference>
<dbReference type="Gene3D" id="3.10.300.10">
    <property type="entry name" value="Methylpurine-DNA glycosylase (MPG)"/>
    <property type="match status" value="1"/>
</dbReference>
<dbReference type="HAMAP" id="MF_00527">
    <property type="entry name" value="3MGH"/>
    <property type="match status" value="1"/>
</dbReference>
<dbReference type="InterPro" id="IPR011034">
    <property type="entry name" value="Formyl_transferase-like_C_sf"/>
</dbReference>
<dbReference type="InterPro" id="IPR003180">
    <property type="entry name" value="MPG"/>
</dbReference>
<dbReference type="InterPro" id="IPR036995">
    <property type="entry name" value="MPG_sf"/>
</dbReference>
<dbReference type="NCBIfam" id="TIGR00567">
    <property type="entry name" value="3mg"/>
    <property type="match status" value="1"/>
</dbReference>
<dbReference type="NCBIfam" id="NF002002">
    <property type="entry name" value="PRK00802.1-2"/>
    <property type="match status" value="1"/>
</dbReference>
<dbReference type="PANTHER" id="PTHR10429">
    <property type="entry name" value="DNA-3-METHYLADENINE GLYCOSYLASE"/>
    <property type="match status" value="1"/>
</dbReference>
<dbReference type="PANTHER" id="PTHR10429:SF0">
    <property type="entry name" value="DNA-3-METHYLADENINE GLYCOSYLASE"/>
    <property type="match status" value="1"/>
</dbReference>
<dbReference type="Pfam" id="PF02245">
    <property type="entry name" value="Pur_DNA_glyco"/>
    <property type="match status" value="1"/>
</dbReference>
<dbReference type="SUPFAM" id="SSF50486">
    <property type="entry name" value="FMT C-terminal domain-like"/>
    <property type="match status" value="1"/>
</dbReference>
<sequence>MEAMITKEFFESKTTIELARDILGMRLVHQTNEGLLSGLIVETEAYLGATDMAAHSFQNLRTKRTEVMFSSPGTIYMYQMHRQVLLNFITMPKGIPEAILIRAIEPDEQAKQQMTQNRHGKTGYELTNGPGKLTQALGLSMQDYGKTLFDSNIWLEEAKLPHLIEATNRIGVPNKGIATHYPLRFTVKGSPYISGQRKNSIRTGIWK</sequence>
<organism>
    <name type="scientific">Listeria monocytogenes serovar 1/2a (strain ATCC BAA-679 / EGD-e)</name>
    <dbReference type="NCBI Taxonomy" id="169963"/>
    <lineage>
        <taxon>Bacteria</taxon>
        <taxon>Bacillati</taxon>
        <taxon>Bacillota</taxon>
        <taxon>Bacilli</taxon>
        <taxon>Bacillales</taxon>
        <taxon>Listeriaceae</taxon>
        <taxon>Listeria</taxon>
    </lineage>
</organism>